<proteinExistence type="inferred from homology"/>
<protein>
    <recommendedName>
        <fullName evidence="1">Phosphoribosyl-AMP cyclohydrolase</fullName>
        <shortName evidence="1">PRA-CH</shortName>
        <ecNumber evidence="1">3.5.4.19</ecNumber>
    </recommendedName>
</protein>
<sequence>MTVRPSALDPAIASRLRRNDAGLFPAIAQQHDTGEVLMLGWMDDEALHRTLTTGRATYWSRSRGEYWVKGDTSGHQQWVRSVALDCDGDAVLVRVDQIGPACHTGTRNCFVADPLPTRVGDPGVTADAGPAR</sequence>
<accession>Q0RFX5</accession>
<reference key="1">
    <citation type="journal article" date="2007" name="Genome Res.">
        <title>Genome characteristics of facultatively symbiotic Frankia sp. strains reflect host range and host plant biogeography.</title>
        <authorList>
            <person name="Normand P."/>
            <person name="Lapierre P."/>
            <person name="Tisa L.S."/>
            <person name="Gogarten J.P."/>
            <person name="Alloisio N."/>
            <person name="Bagnarol E."/>
            <person name="Bassi C.A."/>
            <person name="Berry A.M."/>
            <person name="Bickhart D.M."/>
            <person name="Choisne N."/>
            <person name="Couloux A."/>
            <person name="Cournoyer B."/>
            <person name="Cruveiller S."/>
            <person name="Daubin V."/>
            <person name="Demange N."/>
            <person name="Francino M.P."/>
            <person name="Goltsman E."/>
            <person name="Huang Y."/>
            <person name="Kopp O.R."/>
            <person name="Labarre L."/>
            <person name="Lapidus A."/>
            <person name="Lavire C."/>
            <person name="Marechal J."/>
            <person name="Martinez M."/>
            <person name="Mastronunzio J.E."/>
            <person name="Mullin B.C."/>
            <person name="Niemann J."/>
            <person name="Pujic P."/>
            <person name="Rawnsley T."/>
            <person name="Rouy Z."/>
            <person name="Schenowitz C."/>
            <person name="Sellstedt A."/>
            <person name="Tavares F."/>
            <person name="Tomkins J.P."/>
            <person name="Vallenet D."/>
            <person name="Valverde C."/>
            <person name="Wall L.G."/>
            <person name="Wang Y."/>
            <person name="Medigue C."/>
            <person name="Benson D.R."/>
        </authorList>
    </citation>
    <scope>NUCLEOTIDE SEQUENCE [LARGE SCALE GENOMIC DNA]</scope>
    <source>
        <strain>DSM 45986 / CECT 9034 / ACN14a</strain>
    </source>
</reference>
<feature type="chain" id="PRO_1000063405" description="Phosphoribosyl-AMP cyclohydrolase">
    <location>
        <begin position="1"/>
        <end position="132"/>
    </location>
</feature>
<feature type="binding site" evidence="1">
    <location>
        <position position="85"/>
    </location>
    <ligand>
        <name>Mg(2+)</name>
        <dbReference type="ChEBI" id="CHEBI:18420"/>
    </ligand>
</feature>
<feature type="binding site" evidence="1">
    <location>
        <position position="86"/>
    </location>
    <ligand>
        <name>Zn(2+)</name>
        <dbReference type="ChEBI" id="CHEBI:29105"/>
        <note>ligand shared between dimeric partners</note>
    </ligand>
</feature>
<feature type="binding site" evidence="1">
    <location>
        <position position="87"/>
    </location>
    <ligand>
        <name>Mg(2+)</name>
        <dbReference type="ChEBI" id="CHEBI:18420"/>
    </ligand>
</feature>
<feature type="binding site" evidence="1">
    <location>
        <position position="89"/>
    </location>
    <ligand>
        <name>Mg(2+)</name>
        <dbReference type="ChEBI" id="CHEBI:18420"/>
    </ligand>
</feature>
<feature type="binding site" evidence="1">
    <location>
        <position position="102"/>
    </location>
    <ligand>
        <name>Zn(2+)</name>
        <dbReference type="ChEBI" id="CHEBI:29105"/>
        <note>ligand shared between dimeric partners</note>
    </ligand>
</feature>
<feature type="binding site" evidence="1">
    <location>
        <position position="109"/>
    </location>
    <ligand>
        <name>Zn(2+)</name>
        <dbReference type="ChEBI" id="CHEBI:29105"/>
        <note>ligand shared between dimeric partners</note>
    </ligand>
</feature>
<name>HIS3_FRAAA</name>
<comment type="function">
    <text evidence="1">Catalyzes the hydrolysis of the adenine ring of phosphoribosyl-AMP.</text>
</comment>
<comment type="catalytic activity">
    <reaction evidence="1">
        <text>1-(5-phospho-beta-D-ribosyl)-5'-AMP + H2O = 1-(5-phospho-beta-D-ribosyl)-5-[(5-phospho-beta-D-ribosylamino)methylideneamino]imidazole-4-carboxamide</text>
        <dbReference type="Rhea" id="RHEA:20049"/>
        <dbReference type="ChEBI" id="CHEBI:15377"/>
        <dbReference type="ChEBI" id="CHEBI:58435"/>
        <dbReference type="ChEBI" id="CHEBI:59457"/>
        <dbReference type="EC" id="3.5.4.19"/>
    </reaction>
</comment>
<comment type="cofactor">
    <cofactor evidence="1">
        <name>Mg(2+)</name>
        <dbReference type="ChEBI" id="CHEBI:18420"/>
    </cofactor>
    <text evidence="1">Binds 1 Mg(2+) ion per subunit.</text>
</comment>
<comment type="cofactor">
    <cofactor evidence="1">
        <name>Zn(2+)</name>
        <dbReference type="ChEBI" id="CHEBI:29105"/>
    </cofactor>
    <text evidence="1">Binds 1 zinc ion per subunit.</text>
</comment>
<comment type="pathway">
    <text evidence="1">Amino-acid biosynthesis; L-histidine biosynthesis; L-histidine from 5-phospho-alpha-D-ribose 1-diphosphate: step 3/9.</text>
</comment>
<comment type="subunit">
    <text evidence="1">Homodimer.</text>
</comment>
<comment type="subcellular location">
    <subcellularLocation>
        <location evidence="1">Cytoplasm</location>
    </subcellularLocation>
</comment>
<comment type="similarity">
    <text evidence="1">Belongs to the PRA-CH family.</text>
</comment>
<keyword id="KW-0028">Amino-acid biosynthesis</keyword>
<keyword id="KW-0963">Cytoplasm</keyword>
<keyword id="KW-0368">Histidine biosynthesis</keyword>
<keyword id="KW-0378">Hydrolase</keyword>
<keyword id="KW-0460">Magnesium</keyword>
<keyword id="KW-0479">Metal-binding</keyword>
<keyword id="KW-1185">Reference proteome</keyword>
<keyword id="KW-0862">Zinc</keyword>
<organism>
    <name type="scientific">Frankia alni (strain DSM 45986 / CECT 9034 / ACN14a)</name>
    <dbReference type="NCBI Taxonomy" id="326424"/>
    <lineage>
        <taxon>Bacteria</taxon>
        <taxon>Bacillati</taxon>
        <taxon>Actinomycetota</taxon>
        <taxon>Actinomycetes</taxon>
        <taxon>Frankiales</taxon>
        <taxon>Frankiaceae</taxon>
        <taxon>Frankia</taxon>
    </lineage>
</organism>
<evidence type="ECO:0000255" key="1">
    <source>
        <dbReference type="HAMAP-Rule" id="MF_01021"/>
    </source>
</evidence>
<gene>
    <name evidence="1" type="primary">hisI</name>
    <name type="ordered locus">FRAAL4973</name>
</gene>
<dbReference type="EC" id="3.5.4.19" evidence="1"/>
<dbReference type="EMBL" id="CT573213">
    <property type="protein sequence ID" value="CAJ63614.1"/>
    <property type="molecule type" value="Genomic_DNA"/>
</dbReference>
<dbReference type="RefSeq" id="WP_011606087.1">
    <property type="nucleotide sequence ID" value="NC_008278.1"/>
</dbReference>
<dbReference type="SMR" id="Q0RFX5"/>
<dbReference type="STRING" id="326424.FRAAL4973"/>
<dbReference type="KEGG" id="fal:FRAAL4973"/>
<dbReference type="eggNOG" id="COG0139">
    <property type="taxonomic scope" value="Bacteria"/>
</dbReference>
<dbReference type="HOGENOM" id="CLU_048577_5_1_11"/>
<dbReference type="OrthoDB" id="9795769at2"/>
<dbReference type="UniPathway" id="UPA00031">
    <property type="reaction ID" value="UER00008"/>
</dbReference>
<dbReference type="Proteomes" id="UP000000657">
    <property type="component" value="Chromosome"/>
</dbReference>
<dbReference type="GO" id="GO:0005737">
    <property type="term" value="C:cytoplasm"/>
    <property type="evidence" value="ECO:0007669"/>
    <property type="project" value="UniProtKB-SubCell"/>
</dbReference>
<dbReference type="GO" id="GO:0000287">
    <property type="term" value="F:magnesium ion binding"/>
    <property type="evidence" value="ECO:0007669"/>
    <property type="project" value="UniProtKB-UniRule"/>
</dbReference>
<dbReference type="GO" id="GO:0004635">
    <property type="term" value="F:phosphoribosyl-AMP cyclohydrolase activity"/>
    <property type="evidence" value="ECO:0007669"/>
    <property type="project" value="UniProtKB-UniRule"/>
</dbReference>
<dbReference type="GO" id="GO:0008270">
    <property type="term" value="F:zinc ion binding"/>
    <property type="evidence" value="ECO:0007669"/>
    <property type="project" value="UniProtKB-UniRule"/>
</dbReference>
<dbReference type="GO" id="GO:0000105">
    <property type="term" value="P:L-histidine biosynthetic process"/>
    <property type="evidence" value="ECO:0007669"/>
    <property type="project" value="UniProtKB-UniRule"/>
</dbReference>
<dbReference type="FunFam" id="3.10.20.810:FF:000001">
    <property type="entry name" value="Histidine biosynthesis bifunctional protein HisIE"/>
    <property type="match status" value="1"/>
</dbReference>
<dbReference type="Gene3D" id="3.10.20.810">
    <property type="entry name" value="Phosphoribosyl-AMP cyclohydrolase"/>
    <property type="match status" value="1"/>
</dbReference>
<dbReference type="HAMAP" id="MF_01021">
    <property type="entry name" value="HisI"/>
    <property type="match status" value="1"/>
</dbReference>
<dbReference type="InterPro" id="IPR026660">
    <property type="entry name" value="PRA-CH"/>
</dbReference>
<dbReference type="InterPro" id="IPR002496">
    <property type="entry name" value="PRib_AMP_CycHydrolase_dom"/>
</dbReference>
<dbReference type="InterPro" id="IPR038019">
    <property type="entry name" value="PRib_AMP_CycHydrolase_sf"/>
</dbReference>
<dbReference type="NCBIfam" id="NF000768">
    <property type="entry name" value="PRK00051.1"/>
    <property type="match status" value="1"/>
</dbReference>
<dbReference type="PANTHER" id="PTHR42945">
    <property type="entry name" value="HISTIDINE BIOSYNTHESIS BIFUNCTIONAL PROTEIN"/>
    <property type="match status" value="1"/>
</dbReference>
<dbReference type="PANTHER" id="PTHR42945:SF11">
    <property type="entry name" value="PHOSPHORIBOSYL-AMP CYCLOHYDROLASE"/>
    <property type="match status" value="1"/>
</dbReference>
<dbReference type="Pfam" id="PF01502">
    <property type="entry name" value="PRA-CH"/>
    <property type="match status" value="1"/>
</dbReference>
<dbReference type="SUPFAM" id="SSF141734">
    <property type="entry name" value="HisI-like"/>
    <property type="match status" value="1"/>
</dbReference>